<organismHost>
    <name type="scientific">Escherichia coli</name>
    <dbReference type="NCBI Taxonomy" id="562"/>
</organismHost>
<proteinExistence type="inferred from homology"/>
<organism>
    <name type="scientific">Enterobacteria phage T3</name>
    <name type="common">Bacteriophage T3</name>
    <dbReference type="NCBI Taxonomy" id="10759"/>
    <lineage>
        <taxon>Viruses</taxon>
        <taxon>Duplodnaviria</taxon>
        <taxon>Heunggongvirae</taxon>
        <taxon>Uroviricota</taxon>
        <taxon>Caudoviricetes</taxon>
        <taxon>Autographiviridae</taxon>
        <taxon>Studiervirinae</taxon>
        <taxon>Teetrevirus</taxon>
        <taxon>Teetrevirus T3</taxon>
    </lineage>
</organism>
<protein>
    <recommendedName>
        <fullName>Tail fiber protein</fullName>
    </recommendedName>
    <alternativeName>
        <fullName>Gene product 17</fullName>
        <shortName>Gp17</shortName>
    </alternativeName>
    <alternativeName>
        <fullName>Tail fiber protein gp17</fullName>
    </alternativeName>
</protein>
<comment type="function">
    <text evidence="1">Structural component of the short non-contractile tail. The tail comprises six fibers made of gp17 trimers, 2 nm in diameter and 32 nm in length. May attach to host lipopolysaccharides (LPS) to mediate primary attachment to the host cell.</text>
</comment>
<comment type="subunit">
    <text evidence="1">Homotrimerizes. Interacts with tail components gp11 and gp12.</text>
</comment>
<comment type="subcellular location">
    <subcellularLocation>
        <location evidence="1">Virion</location>
    </subcellularLocation>
</comment>
<comment type="similarity">
    <text evidence="3">Belongs to the T7likevirus tail fiber protein family.</text>
</comment>
<accession>P10308</accession>
<sequence length="557" mass="61801">MANVIKTVLTYQLDGSNRDFNIPFEYLARKFVVVTLIGVDRKVLSINADYRFATRTTISLTKAWGPADGYTTIELRRVTSTTDQLVDFTDGSILRAYDLNVAQIQTMHVAEEARDLTADTIGVNNDGHLDARGRRIVNLANAVDDRDAVPFGQLKTMNQNSWQARNEALQFRNEAETFRNQTEVFKNESGTNATNTKQWRDEANGSRDEAEQFKNTAGQYATSAGNSATTATQSEVNAENSATDADNSRNLAEQHADRLELEADKLGIFNGLAGRIDKGDGTNVYWKGGIHANGRLYLTSDGFDCGQYQQFFGGSAGRYSVMEWGIEKAWLMHVERRERTTAIVDNIQLVVNGHIIAQGGDMTGPLKLQNGHALYLESASDKAQYILSKDGNRNNWHIGRGSDNNNDCTFHSYVYGTNLTLKPDYAVVNKRFHVGQAVVATDGNIQGTKWGRKWLDAYLNDTYVKKTMAWTQVWAAASDSYMGGGSQTDTLHRTCDSATYGLRPETTIGTSSELVLTVSTSFQPRRWLKFQIHSNGRVFKNIADRAATPTAIAVEDV</sequence>
<feature type="chain" id="PRO_0000106530" description="Tail fiber protein">
    <location>
        <begin position="1"/>
        <end position="557"/>
    </location>
</feature>
<feature type="region of interest" description="Disordered" evidence="2">
    <location>
        <begin position="187"/>
        <end position="249"/>
    </location>
</feature>
<feature type="compositionally biased region" description="Polar residues" evidence="2">
    <location>
        <begin position="187"/>
        <end position="197"/>
    </location>
</feature>
<feature type="compositionally biased region" description="Basic and acidic residues" evidence="2">
    <location>
        <begin position="198"/>
        <end position="212"/>
    </location>
</feature>
<feature type="compositionally biased region" description="Low complexity" evidence="2">
    <location>
        <begin position="221"/>
        <end position="234"/>
    </location>
</feature>
<feature type="compositionally biased region" description="Polar residues" evidence="2">
    <location>
        <begin position="235"/>
        <end position="249"/>
    </location>
</feature>
<reference key="1">
    <citation type="journal article" date="1986" name="Virology">
        <title>Cloning and sequencing of the genetic right end of bacteriophage T3 DNA.</title>
        <authorList>
            <person name="Yamada M."/>
            <person name="Fujisawa H."/>
            <person name="Kato H."/>
            <person name="Hamada K."/>
            <person name="Minagawa T."/>
        </authorList>
    </citation>
    <scope>NUCLEOTIDE SEQUENCE [GENOMIC DNA]</scope>
</reference>
<reference key="2">
    <citation type="journal article" date="1986" name="Virology">
        <authorList>
            <person name="Yamada M."/>
            <person name="Fujisawa H."/>
            <person name="Kato H."/>
            <person name="Hamada K."/>
            <person name="Minagawa T."/>
        </authorList>
    </citation>
    <scope>ERRATUM OF PUBMED:3010556</scope>
</reference>
<evidence type="ECO:0000250" key="1">
    <source>
        <dbReference type="UniProtKB" id="P03748"/>
    </source>
</evidence>
<evidence type="ECO:0000256" key="2">
    <source>
        <dbReference type="SAM" id="MobiDB-lite"/>
    </source>
</evidence>
<evidence type="ECO:0000305" key="3"/>
<gene>
    <name type="primary">17</name>
</gene>
<dbReference type="EMBL" id="M14784">
    <property type="protein sequence ID" value="AAA92523.1"/>
    <property type="molecule type" value="Genomic_DNA"/>
</dbReference>
<dbReference type="PIR" id="A23476">
    <property type="entry name" value="TLBPT3"/>
</dbReference>
<dbReference type="SMR" id="P10308"/>
<dbReference type="GO" id="GO:0098024">
    <property type="term" value="C:virus tail, fiber"/>
    <property type="evidence" value="ECO:0007669"/>
    <property type="project" value="UniProtKB-KW"/>
</dbReference>
<dbReference type="GO" id="GO:0098671">
    <property type="term" value="P:adhesion receptor-mediated virion attachment to host cell"/>
    <property type="evidence" value="ECO:0007669"/>
    <property type="project" value="UniProtKB-KW"/>
</dbReference>
<dbReference type="GO" id="GO:0046718">
    <property type="term" value="P:symbiont entry into host cell"/>
    <property type="evidence" value="ECO:0007669"/>
    <property type="project" value="UniProtKB-KW"/>
</dbReference>
<dbReference type="Gene3D" id="2.60.320.30">
    <property type="match status" value="1"/>
</dbReference>
<dbReference type="Gene3D" id="6.20.70.20">
    <property type="match status" value="1"/>
</dbReference>
<dbReference type="Gene3D" id="6.20.80.10">
    <property type="match status" value="1"/>
</dbReference>
<dbReference type="InterPro" id="IPR048388">
    <property type="entry name" value="Gp37_trimer"/>
</dbReference>
<dbReference type="InterPro" id="IPR005604">
    <property type="entry name" value="Phage_T7_tail_fibre-like_N"/>
</dbReference>
<dbReference type="Pfam" id="PF20744">
    <property type="entry name" value="gp37_trimer"/>
    <property type="match status" value="1"/>
</dbReference>
<dbReference type="Pfam" id="PF03906">
    <property type="entry name" value="Phage_T7_tail"/>
    <property type="match status" value="1"/>
</dbReference>
<keyword id="KW-0945">Host-virus interaction</keyword>
<keyword id="KW-0426">Late protein</keyword>
<keyword id="KW-1233">Viral attachment to host adhesion receptor</keyword>
<keyword id="KW-1161">Viral attachment to host cell</keyword>
<keyword id="KW-1230">Viral tail fiber protein</keyword>
<keyword id="KW-1227">Viral tail protein</keyword>
<keyword id="KW-0946">Virion</keyword>
<keyword id="KW-1160">Virus entry into host cell</keyword>
<name>FIBER_BPT3</name>